<dbReference type="EC" id="1.2.1.10" evidence="1"/>
<dbReference type="EMBL" id="U00096">
    <property type="protein sequence ID" value="AAC75508.1"/>
    <property type="molecule type" value="Genomic_DNA"/>
</dbReference>
<dbReference type="EMBL" id="AP009048">
    <property type="protein sequence ID" value="BAA16333.1"/>
    <property type="molecule type" value="Genomic_DNA"/>
</dbReference>
<dbReference type="PIR" id="F65020">
    <property type="entry name" value="F65020"/>
</dbReference>
<dbReference type="RefSeq" id="NP_416950.1">
    <property type="nucleotide sequence ID" value="NC_000913.3"/>
</dbReference>
<dbReference type="RefSeq" id="WP_001075716.1">
    <property type="nucleotide sequence ID" value="NZ_LN832404.1"/>
</dbReference>
<dbReference type="SMR" id="P77445"/>
<dbReference type="BioGRID" id="4260567">
    <property type="interactions" value="13"/>
</dbReference>
<dbReference type="FunCoup" id="P77445">
    <property type="interactions" value="95"/>
</dbReference>
<dbReference type="IntAct" id="P77445">
    <property type="interactions" value="4"/>
</dbReference>
<dbReference type="STRING" id="511145.b2455"/>
<dbReference type="jPOST" id="P77445"/>
<dbReference type="PaxDb" id="511145-b2455"/>
<dbReference type="EnsemblBacteria" id="AAC75508">
    <property type="protein sequence ID" value="AAC75508"/>
    <property type="gene ID" value="b2455"/>
</dbReference>
<dbReference type="GeneID" id="946943"/>
<dbReference type="KEGG" id="ecj:JW2439"/>
<dbReference type="KEGG" id="eco:b2455"/>
<dbReference type="KEGG" id="ecoc:C3026_13625"/>
<dbReference type="PATRIC" id="fig|1411691.4.peg.4285"/>
<dbReference type="EchoBASE" id="EB3937"/>
<dbReference type="eggNOG" id="COG1012">
    <property type="taxonomic scope" value="Bacteria"/>
</dbReference>
<dbReference type="HOGENOM" id="CLU_028794_1_0_6"/>
<dbReference type="InParanoid" id="P77445"/>
<dbReference type="OMA" id="IAIKSRN"/>
<dbReference type="OrthoDB" id="9815791at2"/>
<dbReference type="PhylomeDB" id="P77445"/>
<dbReference type="BioCyc" id="EcoCyc:G7285-MONOMER"/>
<dbReference type="BioCyc" id="MetaCyc:G7285-MONOMER"/>
<dbReference type="UniPathway" id="UPA00560"/>
<dbReference type="PRO" id="PR:P77445"/>
<dbReference type="Proteomes" id="UP000000625">
    <property type="component" value="Chromosome"/>
</dbReference>
<dbReference type="GO" id="GO:0031469">
    <property type="term" value="C:bacterial microcompartment"/>
    <property type="evidence" value="ECO:0007669"/>
    <property type="project" value="UniProtKB-SubCell"/>
</dbReference>
<dbReference type="GO" id="GO:0008774">
    <property type="term" value="F:acetaldehyde dehydrogenase (acetylating) activity"/>
    <property type="evidence" value="ECO:0000314"/>
    <property type="project" value="EcoCyc"/>
</dbReference>
<dbReference type="GO" id="GO:0004029">
    <property type="term" value="F:aldehyde dehydrogenase (NAD+) activity"/>
    <property type="evidence" value="ECO:0000315"/>
    <property type="project" value="CACAO"/>
</dbReference>
<dbReference type="GO" id="GO:0046336">
    <property type="term" value="P:ethanolamine catabolic process"/>
    <property type="evidence" value="ECO:0007669"/>
    <property type="project" value="UniProtKB-UniPathway"/>
</dbReference>
<dbReference type="CDD" id="cd07121">
    <property type="entry name" value="ALDH_EutE"/>
    <property type="match status" value="1"/>
</dbReference>
<dbReference type="FunFam" id="3.40.309.10:FF:000020">
    <property type="entry name" value="Ethanolamine utilization aldehyde dehydrogenase"/>
    <property type="match status" value="1"/>
</dbReference>
<dbReference type="FunFam" id="3.40.605.10:FF:000018">
    <property type="entry name" value="Ethanolamine utilization aldehyde dehydrogenase"/>
    <property type="match status" value="1"/>
</dbReference>
<dbReference type="Gene3D" id="3.40.605.10">
    <property type="entry name" value="Aldehyde Dehydrogenase, Chain A, domain 1"/>
    <property type="match status" value="1"/>
</dbReference>
<dbReference type="Gene3D" id="3.40.309.10">
    <property type="entry name" value="Aldehyde Dehydrogenase, Chain A, domain 2"/>
    <property type="match status" value="1"/>
</dbReference>
<dbReference type="InterPro" id="IPR012408">
    <property type="entry name" value="Acetald_propionald_DH-rel"/>
</dbReference>
<dbReference type="InterPro" id="IPR016161">
    <property type="entry name" value="Ald_DH/histidinol_DH"/>
</dbReference>
<dbReference type="InterPro" id="IPR016163">
    <property type="entry name" value="Ald_DH_C"/>
</dbReference>
<dbReference type="InterPro" id="IPR016162">
    <property type="entry name" value="Ald_DH_N"/>
</dbReference>
<dbReference type="InterPro" id="IPR015590">
    <property type="entry name" value="Aldehyde_DH_dom"/>
</dbReference>
<dbReference type="NCBIfam" id="NF011927">
    <property type="entry name" value="PRK15398.1"/>
    <property type="match status" value="1"/>
</dbReference>
<dbReference type="PANTHER" id="PTHR11699">
    <property type="entry name" value="ALDEHYDE DEHYDROGENASE-RELATED"/>
    <property type="match status" value="1"/>
</dbReference>
<dbReference type="Pfam" id="PF00171">
    <property type="entry name" value="Aldedh"/>
    <property type="match status" value="1"/>
</dbReference>
<dbReference type="PIRSF" id="PIRSF036410">
    <property type="entry name" value="EutE_PduP"/>
    <property type="match status" value="1"/>
</dbReference>
<dbReference type="SUPFAM" id="SSF53720">
    <property type="entry name" value="ALDH-like"/>
    <property type="match status" value="1"/>
</dbReference>
<protein>
    <recommendedName>
        <fullName evidence="1">Acetaldehyde dehydrogenase (acetylating) EutE</fullName>
        <ecNumber evidence="1">1.2.1.10</ecNumber>
    </recommendedName>
    <alternativeName>
        <fullName>Ethanolamine utilization protein EutE</fullName>
    </alternativeName>
</protein>
<feature type="chain" id="PRO_0000087084" description="Acetaldehyde dehydrogenase (acetylating) EutE">
    <location>
        <begin position="1"/>
        <end position="467"/>
    </location>
</feature>
<accession>P77445</accession>
<evidence type="ECO:0000250" key="1">
    <source>
        <dbReference type="UniProtKB" id="P41793"/>
    </source>
</evidence>
<evidence type="ECO:0000269" key="2">
    <source>
    </source>
</evidence>
<evidence type="ECO:0000305" key="3"/>
<evidence type="ECO:0000305" key="4">
    <source>
    </source>
</evidence>
<name>EUTE_ECOLI</name>
<proteinExistence type="inferred from homology"/>
<sequence>MNQQDIEQVVKAVLLKMQSSDTPSAAVHEMGVFASLDDAVAAAKVAQQGLKSVAMRQLAIAAIREAGEKHARDLAELAVSETGMGRVEDKFAKNVAQARGTPGVECLSPQVLTGDNGLTLIENAPWGVVASVTPSTNPAATVINNAISLIAAGNSVIFAPHPAAKKVSQRAITLLNQAIVAAGGPENLLVTVANPDIETAQRLFKFPGIGLLVVTGGEAVVEAARKHTNKRLIAAGAGNPPVVVDETADLARAAQSIVKGASFDNNIICADEKVLIVVDSVADELMRLMEGQHAVKLTAEQAQQLQPVLLKNIDERGKGTVSRDWVGRDAGKIAAAIGLKVPQETRLLFVETTAEHPFAVTELMMPVLPVVRVANVADAIALAVKLEGGCHHTAAMHSRNIENMNQMANAIDTSIFVKNGPCIAGLGLGGEGWTTMTITTPTGEGVTSARTFVRLRRCVLVDAFRIV</sequence>
<gene>
    <name type="primary">eutE</name>
    <name type="synonym">yffX</name>
    <name type="ordered locus">b2455</name>
    <name type="ordered locus">JW2439</name>
</gene>
<organism>
    <name type="scientific">Escherichia coli (strain K12)</name>
    <dbReference type="NCBI Taxonomy" id="83333"/>
    <lineage>
        <taxon>Bacteria</taxon>
        <taxon>Pseudomonadati</taxon>
        <taxon>Pseudomonadota</taxon>
        <taxon>Gammaproteobacteria</taxon>
        <taxon>Enterobacterales</taxon>
        <taxon>Enterobacteriaceae</taxon>
        <taxon>Escherichia</taxon>
    </lineage>
</organism>
<reference key="1">
    <citation type="journal article" date="1997" name="DNA Res.">
        <title>Construction of a contiguous 874-kb sequence of the Escherichia coli-K12 genome corresponding to 50.0-68.8 min on the linkage map and analysis of its sequence features.</title>
        <authorList>
            <person name="Yamamoto Y."/>
            <person name="Aiba H."/>
            <person name="Baba T."/>
            <person name="Hayashi K."/>
            <person name="Inada T."/>
            <person name="Isono K."/>
            <person name="Itoh T."/>
            <person name="Kimura S."/>
            <person name="Kitagawa M."/>
            <person name="Makino K."/>
            <person name="Miki T."/>
            <person name="Mitsuhashi N."/>
            <person name="Mizobuchi K."/>
            <person name="Mori H."/>
            <person name="Nakade S."/>
            <person name="Nakamura Y."/>
            <person name="Nashimoto H."/>
            <person name="Oshima T."/>
            <person name="Oyama S."/>
            <person name="Saito N."/>
            <person name="Sampei G."/>
            <person name="Satoh Y."/>
            <person name="Sivasundaram S."/>
            <person name="Tagami H."/>
            <person name="Takahashi H."/>
            <person name="Takeda J."/>
            <person name="Takemoto K."/>
            <person name="Uehara K."/>
            <person name="Wada C."/>
            <person name="Yamagata S."/>
            <person name="Horiuchi T."/>
        </authorList>
    </citation>
    <scope>NUCLEOTIDE SEQUENCE [LARGE SCALE GENOMIC DNA]</scope>
    <source>
        <strain>K12 / W3110 / ATCC 27325 / DSM 5911</strain>
    </source>
</reference>
<reference key="2">
    <citation type="journal article" date="1997" name="Science">
        <title>The complete genome sequence of Escherichia coli K-12.</title>
        <authorList>
            <person name="Blattner F.R."/>
            <person name="Plunkett G. III"/>
            <person name="Bloch C.A."/>
            <person name="Perna N.T."/>
            <person name="Burland V."/>
            <person name="Riley M."/>
            <person name="Collado-Vides J."/>
            <person name="Glasner J.D."/>
            <person name="Rode C.K."/>
            <person name="Mayhew G.F."/>
            <person name="Gregor J."/>
            <person name="Davis N.W."/>
            <person name="Kirkpatrick H.A."/>
            <person name="Goeden M.A."/>
            <person name="Rose D.J."/>
            <person name="Mau B."/>
            <person name="Shao Y."/>
        </authorList>
    </citation>
    <scope>NUCLEOTIDE SEQUENCE [LARGE SCALE GENOMIC DNA]</scope>
    <source>
        <strain>K12 / MG1655 / ATCC 47076</strain>
    </source>
</reference>
<reference key="3">
    <citation type="journal article" date="2006" name="Mol. Syst. Biol.">
        <title>Highly accurate genome sequences of Escherichia coli K-12 strains MG1655 and W3110.</title>
        <authorList>
            <person name="Hayashi K."/>
            <person name="Morooka N."/>
            <person name="Yamamoto Y."/>
            <person name="Fujita K."/>
            <person name="Isono K."/>
            <person name="Choi S."/>
            <person name="Ohtsubo E."/>
            <person name="Baba T."/>
            <person name="Wanner B.L."/>
            <person name="Mori H."/>
            <person name="Horiuchi T."/>
        </authorList>
    </citation>
    <scope>NUCLEOTIDE SEQUENCE [LARGE SCALE GENOMIC DNA]</scope>
    <source>
        <strain>K12 / W3110 / ATCC 27325 / DSM 5911</strain>
    </source>
</reference>
<reference key="4">
    <citation type="journal article" date="2016" name="Metab. Eng.">
        <title>Introduction of a bacterial acetyl-CoA synthesis pathway improves lactic acid production in Saccharomyces cerevisiae.</title>
        <authorList>
            <person name="Song J.Y."/>
            <person name="Park J.S."/>
            <person name="Kang C.D."/>
            <person name="Cho H.Y."/>
            <person name="Yang D."/>
            <person name="Lee S."/>
            <person name="Cho K.M."/>
        </authorList>
    </citation>
    <scope>FUNCTION</scope>
</reference>
<comment type="function">
    <text evidence="1 2">Acts as the second step in ethanolamine degradation by converting acetaldehyde into acetyl-CoA. May play a role in bacterial microcompartment (BMC) assembly or maintenance. Directly targeted to the BMC (By similarity). Its heterologous expression in S.cerevisiae increases the level of acetylating acetaldehyde dehydrogenase activity (PubMed:26384570).</text>
</comment>
<comment type="catalytic activity">
    <reaction evidence="1">
        <text>acetaldehyde + NAD(+) + CoA = acetyl-CoA + NADH + H(+)</text>
        <dbReference type="Rhea" id="RHEA:23288"/>
        <dbReference type="ChEBI" id="CHEBI:15343"/>
        <dbReference type="ChEBI" id="CHEBI:15378"/>
        <dbReference type="ChEBI" id="CHEBI:57287"/>
        <dbReference type="ChEBI" id="CHEBI:57288"/>
        <dbReference type="ChEBI" id="CHEBI:57540"/>
        <dbReference type="ChEBI" id="CHEBI:57945"/>
        <dbReference type="EC" id="1.2.1.10"/>
    </reaction>
</comment>
<comment type="cofactor">
    <text evidence="1">Has a very strong preference for NAD(+) over NADP(+).</text>
</comment>
<comment type="pathway">
    <text>Amine and polyamine degradation; ethanolamine degradation.</text>
</comment>
<comment type="subunit">
    <text evidence="1">Interacts with EutS, which targets it to the interior of the BMC.</text>
</comment>
<comment type="subcellular location">
    <subcellularLocation>
        <location evidence="1">Bacterial microcompartment</location>
    </subcellularLocation>
    <text evidence="1">Probably located inside the BMC.</text>
</comment>
<comment type="similarity">
    <text evidence="3">Belongs to the EutE/PduP family.</text>
</comment>
<comment type="caution">
    <text evidence="4">In strain MG1655 the eut operon is interrupted by the CPZ-55 prophage, encoding 9 genes situated between eutA and eutB, which are translated in the other direction. CPZ-55 may prevent expression of the eut operon in strain MG1655. Strain W3110 does not have this prophage element and should be able to express the operon.</text>
</comment>
<keyword id="KW-1283">Bacterial microcompartment</keyword>
<keyword id="KW-0520">NAD</keyword>
<keyword id="KW-0560">Oxidoreductase</keyword>
<keyword id="KW-1185">Reference proteome</keyword>